<protein>
    <recommendedName>
        <fullName>Alpha carbonic anhydrase 4</fullName>
        <shortName>AtaCA4</shortName>
        <shortName>AtalphaCA4</shortName>
        <ecNumber>4.2.1.1</ecNumber>
    </recommendedName>
    <alternativeName>
        <fullName>Alpha carbonate dehydratase 4</fullName>
    </alternativeName>
</protein>
<comment type="function">
    <text evidence="1">Reversible hydration of carbon dioxide.</text>
</comment>
<comment type="catalytic activity">
    <reaction>
        <text>hydrogencarbonate + H(+) = CO2 + H2O</text>
        <dbReference type="Rhea" id="RHEA:10748"/>
        <dbReference type="ChEBI" id="CHEBI:15377"/>
        <dbReference type="ChEBI" id="CHEBI:15378"/>
        <dbReference type="ChEBI" id="CHEBI:16526"/>
        <dbReference type="ChEBI" id="CHEBI:17544"/>
        <dbReference type="EC" id="4.2.1.1"/>
    </reaction>
</comment>
<comment type="cofactor">
    <cofactor evidence="1">
        <name>Zn(2+)</name>
        <dbReference type="ChEBI" id="CHEBI:29105"/>
    </cofactor>
</comment>
<comment type="subcellular location">
    <subcellularLocation>
        <location evidence="1">Plastid</location>
        <location evidence="1">Chloroplast stroma</location>
    </subcellularLocation>
    <text evidence="1">Targeted to the chloroplast via a protein-targeting pathway that uses the secretory system.</text>
</comment>
<comment type="PTM">
    <text evidence="1">N-glycosylated.</text>
</comment>
<comment type="similarity">
    <text evidence="4">Belongs to the alpha-class carbonic anhydrase family.</text>
</comment>
<comment type="sequence caution" evidence="4">
    <conflict type="erroneous gene model prediction">
        <sequence resource="EMBL-CDS" id="CAB45894"/>
    </conflict>
</comment>
<comment type="sequence caution" evidence="4">
    <conflict type="erroneous gene model prediction">
        <sequence resource="EMBL-CDS" id="CAB79099"/>
    </conflict>
</comment>
<reference key="1">
    <citation type="journal article" date="1999" name="Nature">
        <title>Sequence and analysis of chromosome 4 of the plant Arabidopsis thaliana.</title>
        <authorList>
            <person name="Mayer K.F.X."/>
            <person name="Schueller C."/>
            <person name="Wambutt R."/>
            <person name="Murphy G."/>
            <person name="Volckaert G."/>
            <person name="Pohl T."/>
            <person name="Duesterhoeft A."/>
            <person name="Stiekema W."/>
            <person name="Entian K.-D."/>
            <person name="Terryn N."/>
            <person name="Harris B."/>
            <person name="Ansorge W."/>
            <person name="Brandt P."/>
            <person name="Grivell L.A."/>
            <person name="Rieger M."/>
            <person name="Weichselgartner M."/>
            <person name="de Simone V."/>
            <person name="Obermaier B."/>
            <person name="Mache R."/>
            <person name="Mueller M."/>
            <person name="Kreis M."/>
            <person name="Delseny M."/>
            <person name="Puigdomenech P."/>
            <person name="Watson M."/>
            <person name="Schmidtheini T."/>
            <person name="Reichert B."/>
            <person name="Portetelle D."/>
            <person name="Perez-Alonso M."/>
            <person name="Boutry M."/>
            <person name="Bancroft I."/>
            <person name="Vos P."/>
            <person name="Hoheisel J."/>
            <person name="Zimmermann W."/>
            <person name="Wedler H."/>
            <person name="Ridley P."/>
            <person name="Langham S.-A."/>
            <person name="McCullagh B."/>
            <person name="Bilham L."/>
            <person name="Robben J."/>
            <person name="van der Schueren J."/>
            <person name="Grymonprez B."/>
            <person name="Chuang Y.-J."/>
            <person name="Vandenbussche F."/>
            <person name="Braeken M."/>
            <person name="Weltjens I."/>
            <person name="Voet M."/>
            <person name="Bastiaens I."/>
            <person name="Aert R."/>
            <person name="Defoor E."/>
            <person name="Weitzenegger T."/>
            <person name="Bothe G."/>
            <person name="Ramsperger U."/>
            <person name="Hilbert H."/>
            <person name="Braun M."/>
            <person name="Holzer E."/>
            <person name="Brandt A."/>
            <person name="Peters S."/>
            <person name="van Staveren M."/>
            <person name="Dirkse W."/>
            <person name="Mooijman P."/>
            <person name="Klein Lankhorst R."/>
            <person name="Rose M."/>
            <person name="Hauf J."/>
            <person name="Koetter P."/>
            <person name="Berneiser S."/>
            <person name="Hempel S."/>
            <person name="Feldpausch M."/>
            <person name="Lamberth S."/>
            <person name="Van den Daele H."/>
            <person name="De Keyser A."/>
            <person name="Buysshaert C."/>
            <person name="Gielen J."/>
            <person name="Villarroel R."/>
            <person name="De Clercq R."/>
            <person name="van Montagu M."/>
            <person name="Rogers J."/>
            <person name="Cronin A."/>
            <person name="Quail M.A."/>
            <person name="Bray-Allen S."/>
            <person name="Clark L."/>
            <person name="Doggett J."/>
            <person name="Hall S."/>
            <person name="Kay M."/>
            <person name="Lennard N."/>
            <person name="McLay K."/>
            <person name="Mayes R."/>
            <person name="Pettett A."/>
            <person name="Rajandream M.A."/>
            <person name="Lyne M."/>
            <person name="Benes V."/>
            <person name="Rechmann S."/>
            <person name="Borkova D."/>
            <person name="Bloecker H."/>
            <person name="Scharfe M."/>
            <person name="Grimm M."/>
            <person name="Loehnert T.-H."/>
            <person name="Dose S."/>
            <person name="de Haan M."/>
            <person name="Maarse A.C."/>
            <person name="Schaefer M."/>
            <person name="Mueller-Auer S."/>
            <person name="Gabel C."/>
            <person name="Fuchs M."/>
            <person name="Fartmann B."/>
            <person name="Granderath K."/>
            <person name="Dauner D."/>
            <person name="Herzl A."/>
            <person name="Neumann S."/>
            <person name="Argiriou A."/>
            <person name="Vitale D."/>
            <person name="Liguori R."/>
            <person name="Piravandi E."/>
            <person name="Massenet O."/>
            <person name="Quigley F."/>
            <person name="Clabauld G."/>
            <person name="Muendlein A."/>
            <person name="Felber R."/>
            <person name="Schnabl S."/>
            <person name="Hiller R."/>
            <person name="Schmidt W."/>
            <person name="Lecharny A."/>
            <person name="Aubourg S."/>
            <person name="Chefdor F."/>
            <person name="Cooke R."/>
            <person name="Berger C."/>
            <person name="Monfort A."/>
            <person name="Casacuberta E."/>
            <person name="Gibbons T."/>
            <person name="Weber N."/>
            <person name="Vandenbol M."/>
            <person name="Bargues M."/>
            <person name="Terol J."/>
            <person name="Torres A."/>
            <person name="Perez-Perez A."/>
            <person name="Purnelle B."/>
            <person name="Bent E."/>
            <person name="Johnson S."/>
            <person name="Tacon D."/>
            <person name="Jesse T."/>
            <person name="Heijnen L."/>
            <person name="Schwarz S."/>
            <person name="Scholler P."/>
            <person name="Heber S."/>
            <person name="Francs P."/>
            <person name="Bielke C."/>
            <person name="Frishman D."/>
            <person name="Haase D."/>
            <person name="Lemcke K."/>
            <person name="Mewes H.-W."/>
            <person name="Stocker S."/>
            <person name="Zaccaria P."/>
            <person name="Bevan M."/>
            <person name="Wilson R.K."/>
            <person name="de la Bastide M."/>
            <person name="Habermann K."/>
            <person name="Parnell L."/>
            <person name="Dedhia N."/>
            <person name="Gnoj L."/>
            <person name="Schutz K."/>
            <person name="Huang E."/>
            <person name="Spiegel L."/>
            <person name="Sekhon M."/>
            <person name="Murray J."/>
            <person name="Sheet P."/>
            <person name="Cordes M."/>
            <person name="Abu-Threideh J."/>
            <person name="Stoneking T."/>
            <person name="Kalicki J."/>
            <person name="Graves T."/>
            <person name="Harmon G."/>
            <person name="Edwards J."/>
            <person name="Latreille P."/>
            <person name="Courtney L."/>
            <person name="Cloud J."/>
            <person name="Abbott A."/>
            <person name="Scott K."/>
            <person name="Johnson D."/>
            <person name="Minx P."/>
            <person name="Bentley D."/>
            <person name="Fulton B."/>
            <person name="Miller N."/>
            <person name="Greco T."/>
            <person name="Kemp K."/>
            <person name="Kramer J."/>
            <person name="Fulton L."/>
            <person name="Mardis E."/>
            <person name="Dante M."/>
            <person name="Pepin K."/>
            <person name="Hillier L.W."/>
            <person name="Nelson J."/>
            <person name="Spieth J."/>
            <person name="Ryan E."/>
            <person name="Andrews S."/>
            <person name="Geisel C."/>
            <person name="Layman D."/>
            <person name="Du H."/>
            <person name="Ali J."/>
            <person name="Berghoff A."/>
            <person name="Jones K."/>
            <person name="Drone K."/>
            <person name="Cotton M."/>
            <person name="Joshu C."/>
            <person name="Antonoiu B."/>
            <person name="Zidanic M."/>
            <person name="Strong C."/>
            <person name="Sun H."/>
            <person name="Lamar B."/>
            <person name="Yordan C."/>
            <person name="Ma P."/>
            <person name="Zhong J."/>
            <person name="Preston R."/>
            <person name="Vil D."/>
            <person name="Shekher M."/>
            <person name="Matero A."/>
            <person name="Shah R."/>
            <person name="Swaby I.K."/>
            <person name="O'Shaughnessy A."/>
            <person name="Rodriguez M."/>
            <person name="Hoffman J."/>
            <person name="Till S."/>
            <person name="Granat S."/>
            <person name="Shohdy N."/>
            <person name="Hasegawa A."/>
            <person name="Hameed A."/>
            <person name="Lodhi M."/>
            <person name="Johnson A."/>
            <person name="Chen E."/>
            <person name="Marra M.A."/>
            <person name="Martienssen R."/>
            <person name="McCombie W.R."/>
        </authorList>
    </citation>
    <scope>NUCLEOTIDE SEQUENCE [LARGE SCALE GENOMIC DNA]</scope>
    <source>
        <strain>cv. Columbia</strain>
    </source>
</reference>
<reference key="2">
    <citation type="journal article" date="2017" name="Plant J.">
        <title>Araport11: a complete reannotation of the Arabidopsis thaliana reference genome.</title>
        <authorList>
            <person name="Cheng C.Y."/>
            <person name="Krishnakumar V."/>
            <person name="Chan A.P."/>
            <person name="Thibaud-Nissen F."/>
            <person name="Schobel S."/>
            <person name="Town C.D."/>
        </authorList>
    </citation>
    <scope>GENOME REANNOTATION</scope>
    <source>
        <strain>cv. Columbia</strain>
    </source>
</reference>
<reference key="3">
    <citation type="journal article" date="2007" name="Plant Cell Environ.">
        <title>Characterization and expression analysis of genes encoding alpha and beta carbonic anhydrases in Arabidopsis.</title>
        <authorList>
            <person name="Fabre N."/>
            <person name="Reiter I.M."/>
            <person name="Becuwe-Linka N."/>
            <person name="Genty B."/>
            <person name="Rumeau D."/>
        </authorList>
    </citation>
    <scope>GENE FAMILY</scope>
    <scope>NOMENCLATURE</scope>
    <source>
        <strain>cv. Columbia</strain>
    </source>
</reference>
<name>ATCA4_ARATH</name>
<feature type="signal peptide" evidence="2">
    <location>
        <begin position="1"/>
        <end position="26"/>
    </location>
</feature>
<feature type="chain" id="PRO_0000429730" description="Alpha carbonic anhydrase 4">
    <location>
        <begin position="27"/>
        <end position="267"/>
    </location>
</feature>
<feature type="domain" description="Alpha-carbonic anhydrase" evidence="3">
    <location>
        <begin position="34"/>
        <end position="264"/>
    </location>
</feature>
<feature type="active site" description="Proton acceptor" evidence="3">
    <location>
        <position position="99"/>
    </location>
</feature>
<feature type="binding site" evidence="3">
    <location>
        <position position="125"/>
    </location>
    <ligand>
        <name>Zn(2+)</name>
        <dbReference type="ChEBI" id="CHEBI:29105"/>
        <note>catalytic</note>
    </ligand>
</feature>
<feature type="binding site" evidence="3">
    <location>
        <position position="127"/>
    </location>
    <ligand>
        <name>Zn(2+)</name>
        <dbReference type="ChEBI" id="CHEBI:29105"/>
        <note>catalytic</note>
    </ligand>
</feature>
<feature type="binding site" evidence="3">
    <location>
        <position position="144"/>
    </location>
    <ligand>
        <name>Zn(2+)</name>
        <dbReference type="ChEBI" id="CHEBI:29105"/>
        <note>catalytic</note>
    </ligand>
</feature>
<feature type="binding site" evidence="1">
    <location>
        <begin position="210"/>
        <end position="211"/>
    </location>
    <ligand>
        <name>substrate</name>
    </ligand>
</feature>
<feature type="glycosylation site" description="N-linked (GlcNAc...) asparagine" evidence="2">
    <location>
        <position position="22"/>
    </location>
</feature>
<feature type="glycosylation site" description="N-linked (GlcNAc...) asparagine" evidence="2">
    <location>
        <position position="135"/>
    </location>
</feature>
<feature type="disulfide bond" evidence="1">
    <location>
        <begin position="59"/>
        <end position="214"/>
    </location>
</feature>
<dbReference type="EC" id="4.2.1.1"/>
<dbReference type="EMBL" id="AL080282">
    <property type="protein sequence ID" value="CAB45894.1"/>
    <property type="status" value="ALT_SEQ"/>
    <property type="molecule type" value="Genomic_DNA"/>
</dbReference>
<dbReference type="EMBL" id="AL161554">
    <property type="protein sequence ID" value="CAB79099.1"/>
    <property type="status" value="ALT_SEQ"/>
    <property type="molecule type" value="Genomic_DNA"/>
</dbReference>
<dbReference type="EMBL" id="CP002687">
    <property type="protein sequence ID" value="AEE84385.1"/>
    <property type="molecule type" value="Genomic_DNA"/>
</dbReference>
<dbReference type="PIR" id="T10641">
    <property type="entry name" value="T10641"/>
</dbReference>
<dbReference type="RefSeq" id="NP_193831.1">
    <property type="nucleotide sequence ID" value="NM_118217.2"/>
</dbReference>
<dbReference type="SMR" id="F4JIK2"/>
<dbReference type="FunCoup" id="F4JIK2">
    <property type="interactions" value="62"/>
</dbReference>
<dbReference type="IntAct" id="F4JIK2">
    <property type="interactions" value="2"/>
</dbReference>
<dbReference type="STRING" id="3702.F4JIK2"/>
<dbReference type="GlyCosmos" id="F4JIK2">
    <property type="glycosylation" value="2 sites, No reported glycans"/>
</dbReference>
<dbReference type="GlyGen" id="F4JIK2">
    <property type="glycosylation" value="2 sites"/>
</dbReference>
<dbReference type="PaxDb" id="3702-AT4G20990.1"/>
<dbReference type="EnsemblPlants" id="AT4G20990.1">
    <property type="protein sequence ID" value="AT4G20990.1"/>
    <property type="gene ID" value="AT4G20990"/>
</dbReference>
<dbReference type="GeneID" id="827846"/>
<dbReference type="Gramene" id="AT4G20990.1">
    <property type="protein sequence ID" value="AT4G20990.1"/>
    <property type="gene ID" value="AT4G20990"/>
</dbReference>
<dbReference type="KEGG" id="ath:AT4G20990"/>
<dbReference type="Araport" id="AT4G20990"/>
<dbReference type="TAIR" id="AT4G20990">
    <property type="gene designation" value="ACA4"/>
</dbReference>
<dbReference type="eggNOG" id="KOG0382">
    <property type="taxonomic scope" value="Eukaryota"/>
</dbReference>
<dbReference type="HOGENOM" id="CLU_039326_0_0_1"/>
<dbReference type="InParanoid" id="F4JIK2"/>
<dbReference type="OMA" id="INPHWKV"/>
<dbReference type="PRO" id="PR:F4JIK2"/>
<dbReference type="Proteomes" id="UP000006548">
    <property type="component" value="Chromosome 4"/>
</dbReference>
<dbReference type="ExpressionAtlas" id="F4JIK2">
    <property type="expression patterns" value="baseline and differential"/>
</dbReference>
<dbReference type="GO" id="GO:0009570">
    <property type="term" value="C:chloroplast stroma"/>
    <property type="evidence" value="ECO:0007669"/>
    <property type="project" value="UniProtKB-SubCell"/>
</dbReference>
<dbReference type="GO" id="GO:0009535">
    <property type="term" value="C:chloroplast thylakoid membrane"/>
    <property type="evidence" value="ECO:0007005"/>
    <property type="project" value="TAIR"/>
</dbReference>
<dbReference type="GO" id="GO:0004089">
    <property type="term" value="F:carbonate dehydratase activity"/>
    <property type="evidence" value="ECO:0007669"/>
    <property type="project" value="UniProtKB-EC"/>
</dbReference>
<dbReference type="GO" id="GO:0008270">
    <property type="term" value="F:zinc ion binding"/>
    <property type="evidence" value="ECO:0007669"/>
    <property type="project" value="InterPro"/>
</dbReference>
<dbReference type="CDD" id="cd03124">
    <property type="entry name" value="alpha_CA_prokaryotic_like"/>
    <property type="match status" value="1"/>
</dbReference>
<dbReference type="FunFam" id="3.10.200.10:FF:000007">
    <property type="entry name" value="Alpha carbonic anhydrase 3"/>
    <property type="match status" value="1"/>
</dbReference>
<dbReference type="Gene3D" id="3.10.200.10">
    <property type="entry name" value="Alpha carbonic anhydrase"/>
    <property type="match status" value="1"/>
</dbReference>
<dbReference type="InterPro" id="IPR041891">
    <property type="entry name" value="Alpha_CA_prokaryot-like"/>
</dbReference>
<dbReference type="InterPro" id="IPR001148">
    <property type="entry name" value="CA_dom"/>
</dbReference>
<dbReference type="InterPro" id="IPR036398">
    <property type="entry name" value="CA_dom_sf"/>
</dbReference>
<dbReference type="InterPro" id="IPR023561">
    <property type="entry name" value="Carbonic_anhydrase_a-class"/>
</dbReference>
<dbReference type="InterPro" id="IPR018338">
    <property type="entry name" value="Carbonic_anhydrase_a-class_CS"/>
</dbReference>
<dbReference type="PANTHER" id="PTHR18952:SF271">
    <property type="entry name" value="ALPHA CARBONIC ANHYDRASE 4-RELATED"/>
    <property type="match status" value="1"/>
</dbReference>
<dbReference type="PANTHER" id="PTHR18952">
    <property type="entry name" value="CARBONIC ANHYDRASE"/>
    <property type="match status" value="1"/>
</dbReference>
<dbReference type="Pfam" id="PF00194">
    <property type="entry name" value="Carb_anhydrase"/>
    <property type="match status" value="1"/>
</dbReference>
<dbReference type="SMART" id="SM01057">
    <property type="entry name" value="Carb_anhydrase"/>
    <property type="match status" value="1"/>
</dbReference>
<dbReference type="SUPFAM" id="SSF51069">
    <property type="entry name" value="Carbonic anhydrase"/>
    <property type="match status" value="1"/>
</dbReference>
<dbReference type="PROSITE" id="PS00162">
    <property type="entry name" value="ALPHA_CA_1"/>
    <property type="match status" value="1"/>
</dbReference>
<dbReference type="PROSITE" id="PS51144">
    <property type="entry name" value="ALPHA_CA_2"/>
    <property type="match status" value="1"/>
</dbReference>
<keyword id="KW-0150">Chloroplast</keyword>
<keyword id="KW-1015">Disulfide bond</keyword>
<keyword id="KW-0325">Glycoprotein</keyword>
<keyword id="KW-0456">Lyase</keyword>
<keyword id="KW-0479">Metal-binding</keyword>
<keyword id="KW-0934">Plastid</keyword>
<keyword id="KW-1185">Reference proteome</keyword>
<keyword id="KW-0732">Signal</keyword>
<keyword id="KW-0862">Zinc</keyword>
<organism>
    <name type="scientific">Arabidopsis thaliana</name>
    <name type="common">Mouse-ear cress</name>
    <dbReference type="NCBI Taxonomy" id="3702"/>
    <lineage>
        <taxon>Eukaryota</taxon>
        <taxon>Viridiplantae</taxon>
        <taxon>Streptophyta</taxon>
        <taxon>Embryophyta</taxon>
        <taxon>Tracheophyta</taxon>
        <taxon>Spermatophyta</taxon>
        <taxon>Magnoliopsida</taxon>
        <taxon>eudicotyledons</taxon>
        <taxon>Gunneridae</taxon>
        <taxon>Pentapetalae</taxon>
        <taxon>rosids</taxon>
        <taxon>malvids</taxon>
        <taxon>Brassicales</taxon>
        <taxon>Brassicaceae</taxon>
        <taxon>Camelineae</taxon>
        <taxon>Arabidopsis</taxon>
    </lineage>
</organism>
<gene>
    <name type="primary">ACA4</name>
    <name type="ordered locus">At4g20990</name>
    <name type="ORF">T13K14.150</name>
</gene>
<evidence type="ECO:0000250" key="1"/>
<evidence type="ECO:0000255" key="2"/>
<evidence type="ECO:0000255" key="3">
    <source>
        <dbReference type="PROSITE-ProRule" id="PRU01134"/>
    </source>
</evidence>
<evidence type="ECO:0000305" key="4"/>
<proteinExistence type="inferred from homology"/>
<accession>F4JIK2</accession>
<accession>Q9SUB5</accession>
<sequence>MDTNAKTIFFMAMCFIYLSFPNISHAHSEVDDETPFTYEQKTEKGPEGWGKINPHWKVCNTGRYQSPIDLTNERVSLIHDQAWTRQYKPAPAVITNRGHDIMVSWKGDAGKMTIRKTDFNLVQCHWHSPSEHTVNGTRYDLELHMVHTSARGRTAVIGVLYKLGEPNEFLTKLLNGIKAVGNKEINLGMIDPREIRFQTRKFYRYIGSLTVPPCTEGVIWTVVKRVNTISMEQITALRQAVDDGFETNSRPVQDSKGRSVWFYDPNV</sequence>